<accession>Q1WS52</accession>
<sequence length="114" mass="12438">MIEVALGAGLGASVRYLITQVLKSKTRVFPWATFIINITGALLLGFLHSKITSSHILLLLGTGFLGGYTTFSTFQVELVTLVNNRKQKMMIIYLLLTVICGILAAYCGSWLGKL</sequence>
<keyword id="KW-1003">Cell membrane</keyword>
<keyword id="KW-0407">Ion channel</keyword>
<keyword id="KW-0406">Ion transport</keyword>
<keyword id="KW-0472">Membrane</keyword>
<keyword id="KW-0479">Metal-binding</keyword>
<keyword id="KW-1185">Reference proteome</keyword>
<keyword id="KW-0915">Sodium</keyword>
<keyword id="KW-0812">Transmembrane</keyword>
<keyword id="KW-1133">Transmembrane helix</keyword>
<keyword id="KW-0813">Transport</keyword>
<dbReference type="EMBL" id="CP000233">
    <property type="protein sequence ID" value="ABE00277.1"/>
    <property type="molecule type" value="Genomic_DNA"/>
</dbReference>
<dbReference type="RefSeq" id="WP_011476361.1">
    <property type="nucleotide sequence ID" value="NC_007929.1"/>
</dbReference>
<dbReference type="RefSeq" id="YP_536360.1">
    <property type="nucleotide sequence ID" value="NC_007929.1"/>
</dbReference>
<dbReference type="SMR" id="Q1WS52"/>
<dbReference type="STRING" id="362948.LSL_1473"/>
<dbReference type="KEGG" id="lsl:LSL_1473"/>
<dbReference type="PATRIC" id="fig|362948.14.peg.1556"/>
<dbReference type="HOGENOM" id="CLU_114342_2_3_9"/>
<dbReference type="OrthoDB" id="9815830at2"/>
<dbReference type="Proteomes" id="UP000006559">
    <property type="component" value="Chromosome"/>
</dbReference>
<dbReference type="GO" id="GO:0005886">
    <property type="term" value="C:plasma membrane"/>
    <property type="evidence" value="ECO:0007669"/>
    <property type="project" value="UniProtKB-SubCell"/>
</dbReference>
<dbReference type="GO" id="GO:0062054">
    <property type="term" value="F:fluoride channel activity"/>
    <property type="evidence" value="ECO:0007669"/>
    <property type="project" value="UniProtKB-UniRule"/>
</dbReference>
<dbReference type="GO" id="GO:0046872">
    <property type="term" value="F:metal ion binding"/>
    <property type="evidence" value="ECO:0007669"/>
    <property type="project" value="UniProtKB-KW"/>
</dbReference>
<dbReference type="GO" id="GO:0140114">
    <property type="term" value="P:cellular detoxification of fluoride"/>
    <property type="evidence" value="ECO:0007669"/>
    <property type="project" value="UniProtKB-UniRule"/>
</dbReference>
<dbReference type="HAMAP" id="MF_00454">
    <property type="entry name" value="FluC"/>
    <property type="match status" value="1"/>
</dbReference>
<dbReference type="InterPro" id="IPR003691">
    <property type="entry name" value="FluC"/>
</dbReference>
<dbReference type="NCBIfam" id="TIGR00494">
    <property type="entry name" value="crcB"/>
    <property type="match status" value="1"/>
</dbReference>
<dbReference type="PANTHER" id="PTHR28259">
    <property type="entry name" value="FLUORIDE EXPORT PROTEIN 1-RELATED"/>
    <property type="match status" value="1"/>
</dbReference>
<dbReference type="PANTHER" id="PTHR28259:SF16">
    <property type="entry name" value="FLUORIDE-SPECIFIC ION CHANNEL FLUC 2"/>
    <property type="match status" value="1"/>
</dbReference>
<dbReference type="Pfam" id="PF02537">
    <property type="entry name" value="CRCB"/>
    <property type="match status" value="1"/>
</dbReference>
<comment type="function">
    <text evidence="1">Fluoride-specific ion channel. Important for reducing fluoride concentration in the cell, thus reducing its toxicity.</text>
</comment>
<comment type="catalytic activity">
    <reaction evidence="1">
        <text>fluoride(in) = fluoride(out)</text>
        <dbReference type="Rhea" id="RHEA:76159"/>
        <dbReference type="ChEBI" id="CHEBI:17051"/>
    </reaction>
    <physiologicalReaction direction="left-to-right" evidence="1">
        <dbReference type="Rhea" id="RHEA:76160"/>
    </physiologicalReaction>
</comment>
<comment type="activity regulation">
    <text evidence="1">Na(+) is not transported, but it plays an essential structural role and its presence is essential for fluoride channel function.</text>
</comment>
<comment type="subcellular location">
    <subcellularLocation>
        <location evidence="1">Cell membrane</location>
        <topology evidence="1">Multi-pass membrane protein</topology>
    </subcellularLocation>
</comment>
<comment type="similarity">
    <text evidence="1">Belongs to the fluoride channel Fluc/FEX (TC 1.A.43) family.</text>
</comment>
<gene>
    <name evidence="1" type="primary">fluC1</name>
    <name evidence="1" type="synonym">crcB1</name>
    <name type="ordered locus">LSL_1473</name>
</gene>
<proteinExistence type="inferred from homology"/>
<evidence type="ECO:0000255" key="1">
    <source>
        <dbReference type="HAMAP-Rule" id="MF_00454"/>
    </source>
</evidence>
<protein>
    <recommendedName>
        <fullName evidence="1">Fluoride-specific ion channel FluC 1</fullName>
    </recommendedName>
</protein>
<feature type="chain" id="PRO_0000252894" description="Fluoride-specific ion channel FluC 1">
    <location>
        <begin position="1"/>
        <end position="114"/>
    </location>
</feature>
<feature type="transmembrane region" description="Helical" evidence="1">
    <location>
        <begin position="28"/>
        <end position="48"/>
    </location>
</feature>
<feature type="transmembrane region" description="Helical" evidence="1">
    <location>
        <begin position="56"/>
        <end position="76"/>
    </location>
</feature>
<feature type="transmembrane region" description="Helical" evidence="1">
    <location>
        <begin position="91"/>
        <end position="111"/>
    </location>
</feature>
<feature type="binding site" evidence="1">
    <location>
        <position position="66"/>
    </location>
    <ligand>
        <name>Na(+)</name>
        <dbReference type="ChEBI" id="CHEBI:29101"/>
        <note>structural</note>
    </ligand>
</feature>
<feature type="binding site" evidence="1">
    <location>
        <position position="69"/>
    </location>
    <ligand>
        <name>Na(+)</name>
        <dbReference type="ChEBI" id="CHEBI:29101"/>
        <note>structural</note>
    </ligand>
</feature>
<name>FLUC1_LIGS1</name>
<organism>
    <name type="scientific">Ligilactobacillus salivarius (strain UCC118)</name>
    <name type="common">Lactobacillus salivarius</name>
    <dbReference type="NCBI Taxonomy" id="362948"/>
    <lineage>
        <taxon>Bacteria</taxon>
        <taxon>Bacillati</taxon>
        <taxon>Bacillota</taxon>
        <taxon>Bacilli</taxon>
        <taxon>Lactobacillales</taxon>
        <taxon>Lactobacillaceae</taxon>
        <taxon>Ligilactobacillus</taxon>
    </lineage>
</organism>
<reference key="1">
    <citation type="journal article" date="2006" name="Proc. Natl. Acad. Sci. U.S.A.">
        <title>Multireplicon genome architecture of Lactobacillus salivarius.</title>
        <authorList>
            <person name="Claesson M.J."/>
            <person name="Li Y."/>
            <person name="Leahy S."/>
            <person name="Canchaya C."/>
            <person name="van Pijkeren J.P."/>
            <person name="Cerdeno-Tarraga A.M."/>
            <person name="Parkhill J."/>
            <person name="Flynn S."/>
            <person name="O'Sullivan G.C."/>
            <person name="Collins J.K."/>
            <person name="Higgins D."/>
            <person name="Shanahan F."/>
            <person name="Fitzgerald G.F."/>
            <person name="van Sinderen D."/>
            <person name="O'Toole P.W."/>
        </authorList>
    </citation>
    <scope>NUCLEOTIDE SEQUENCE [LARGE SCALE GENOMIC DNA]</scope>
    <source>
        <strain>UCC118</strain>
    </source>
</reference>